<organism>
    <name type="scientific">Cryptococcus neoformans var. neoformans serotype D (strain JEC21 / ATCC MYA-565)</name>
    <name type="common">Filobasidiella neoformans</name>
    <dbReference type="NCBI Taxonomy" id="214684"/>
    <lineage>
        <taxon>Eukaryota</taxon>
        <taxon>Fungi</taxon>
        <taxon>Dikarya</taxon>
        <taxon>Basidiomycota</taxon>
        <taxon>Agaricomycotina</taxon>
        <taxon>Tremellomycetes</taxon>
        <taxon>Tremellales</taxon>
        <taxon>Cryptococcaceae</taxon>
        <taxon>Cryptococcus</taxon>
        <taxon>Cryptococcus neoformans species complex</taxon>
    </lineage>
</organism>
<gene>
    <name type="primary">MCA1</name>
    <name type="ordered locus">CNJ00740</name>
</gene>
<comment type="function">
    <text evidence="1">Involved in cell death (apoptosis).</text>
</comment>
<comment type="similarity">
    <text evidence="4">Belongs to the peptidase C14B family.</text>
</comment>
<sequence>MSWNQYPGGGHHQQGGYGYRPPPPQWAQQGPPPPPNMGYRPPPPPQAYYNNPPPPQQYQRPAPQQNGYQQGGYQQQQQSQGNYRTSNGGYVPPTGAPVEASYHHTGAGYTPPSGTPQRTSAPYGAGAPIRPPSQAQHYGPQLQGQGGQSAQPYFQYSQCTGKKKALCIGINYVGSSSALAGCINDAHNVQKFLIERYGYKSEDIVMLTDDARNPRQIPTRANILAAMHWLVQGAQPNDSLFFHYSGHGGQTPDLDGDEDDGYDEVIYPLDFKTAGHIVDDDMHNIMVRPLPAGCRLTAIYDSCHSGTALDLPYIYSTEGVIKEPNLLAEAGQGLLSAGMSYLRGDTGGMLQGIMGIGKKVMNQNSGAMEKARQTKTSPADVISWSGCKDSQTSADTQEAGRATGAMSYAFIAALTKYPQQSYVQLLNTIRDELKGKYDQKPQLSASHPMDTNILFIC</sequence>
<protein>
    <recommendedName>
        <fullName>Metacaspase-1</fullName>
        <ecNumber>3.4.22.-</ecNumber>
    </recommendedName>
</protein>
<name>MCA1_CRYNJ</name>
<dbReference type="EC" id="3.4.22.-"/>
<dbReference type="EMBL" id="AE017350">
    <property type="protein sequence ID" value="AAW45938.2"/>
    <property type="molecule type" value="Genomic_DNA"/>
</dbReference>
<dbReference type="RefSeq" id="XP_567455.1">
    <property type="nucleotide sequence ID" value="XM_567455.1"/>
</dbReference>
<dbReference type="SMR" id="P0CM58"/>
<dbReference type="FunCoup" id="P0CM58">
    <property type="interactions" value="334"/>
</dbReference>
<dbReference type="PaxDb" id="214684-P0CM58"/>
<dbReference type="eggNOG" id="KOG1546">
    <property type="taxonomic scope" value="Eukaryota"/>
</dbReference>
<dbReference type="HOGENOM" id="CLU_029389_0_2_1"/>
<dbReference type="InParanoid" id="P0CM58"/>
<dbReference type="Proteomes" id="UP000002149">
    <property type="component" value="Chromosome 10"/>
</dbReference>
<dbReference type="GO" id="GO:0005737">
    <property type="term" value="C:cytoplasm"/>
    <property type="evidence" value="ECO:0000318"/>
    <property type="project" value="GO_Central"/>
</dbReference>
<dbReference type="GO" id="GO:0004197">
    <property type="term" value="F:cysteine-type endopeptidase activity"/>
    <property type="evidence" value="ECO:0000318"/>
    <property type="project" value="GO_Central"/>
</dbReference>
<dbReference type="GO" id="GO:0006915">
    <property type="term" value="P:apoptotic process"/>
    <property type="evidence" value="ECO:0007669"/>
    <property type="project" value="UniProtKB-KW"/>
</dbReference>
<dbReference type="GO" id="GO:0006508">
    <property type="term" value="P:proteolysis"/>
    <property type="evidence" value="ECO:0000318"/>
    <property type="project" value="GO_Central"/>
</dbReference>
<dbReference type="Gene3D" id="3.40.50.12660">
    <property type="match status" value="2"/>
</dbReference>
<dbReference type="InterPro" id="IPR029030">
    <property type="entry name" value="Caspase-like_dom_sf"/>
</dbReference>
<dbReference type="InterPro" id="IPR050452">
    <property type="entry name" value="Metacaspase"/>
</dbReference>
<dbReference type="InterPro" id="IPR011600">
    <property type="entry name" value="Pept_C14_caspase"/>
</dbReference>
<dbReference type="PANTHER" id="PTHR48104:SF30">
    <property type="entry name" value="METACASPASE-1"/>
    <property type="match status" value="1"/>
</dbReference>
<dbReference type="PANTHER" id="PTHR48104">
    <property type="entry name" value="METACASPASE-4"/>
    <property type="match status" value="1"/>
</dbReference>
<dbReference type="Pfam" id="PF00656">
    <property type="entry name" value="Peptidase_C14"/>
    <property type="match status" value="1"/>
</dbReference>
<dbReference type="SUPFAM" id="SSF52129">
    <property type="entry name" value="Caspase-like"/>
    <property type="match status" value="1"/>
</dbReference>
<accession>P0CM58</accession>
<accession>Q55KQ8</accession>
<accession>Q5KAR8</accession>
<reference key="1">
    <citation type="journal article" date="2005" name="Science">
        <title>The genome of the basidiomycetous yeast and human pathogen Cryptococcus neoformans.</title>
        <authorList>
            <person name="Loftus B.J."/>
            <person name="Fung E."/>
            <person name="Roncaglia P."/>
            <person name="Rowley D."/>
            <person name="Amedeo P."/>
            <person name="Bruno D."/>
            <person name="Vamathevan J."/>
            <person name="Miranda M."/>
            <person name="Anderson I.J."/>
            <person name="Fraser J.A."/>
            <person name="Allen J.E."/>
            <person name="Bosdet I.E."/>
            <person name="Brent M.R."/>
            <person name="Chiu R."/>
            <person name="Doering T.L."/>
            <person name="Donlin M.J."/>
            <person name="D'Souza C.A."/>
            <person name="Fox D.S."/>
            <person name="Grinberg V."/>
            <person name="Fu J."/>
            <person name="Fukushima M."/>
            <person name="Haas B.J."/>
            <person name="Huang J.C."/>
            <person name="Janbon G."/>
            <person name="Jones S.J.M."/>
            <person name="Koo H.L."/>
            <person name="Krzywinski M.I."/>
            <person name="Kwon-Chung K.J."/>
            <person name="Lengeler K.B."/>
            <person name="Maiti R."/>
            <person name="Marra M.A."/>
            <person name="Marra R.E."/>
            <person name="Mathewson C.A."/>
            <person name="Mitchell T.G."/>
            <person name="Pertea M."/>
            <person name="Riggs F.R."/>
            <person name="Salzberg S.L."/>
            <person name="Schein J.E."/>
            <person name="Shvartsbeyn A."/>
            <person name="Shin H."/>
            <person name="Shumway M."/>
            <person name="Specht C.A."/>
            <person name="Suh B.B."/>
            <person name="Tenney A."/>
            <person name="Utterback T.R."/>
            <person name="Wickes B.L."/>
            <person name="Wortman J.R."/>
            <person name="Wye N.H."/>
            <person name="Kronstad J.W."/>
            <person name="Lodge J.K."/>
            <person name="Heitman J."/>
            <person name="Davis R.W."/>
            <person name="Fraser C.M."/>
            <person name="Hyman R.W."/>
        </authorList>
    </citation>
    <scope>NUCLEOTIDE SEQUENCE [LARGE SCALE GENOMIC DNA]</scope>
    <source>
        <strain>JEC21 / ATCC MYA-565</strain>
    </source>
</reference>
<feature type="propeptide" id="PRO_0000333644" evidence="2">
    <location>
        <begin position="1"/>
        <end status="unknown"/>
    </location>
</feature>
<feature type="chain" id="PRO_0000333645" description="Metacaspase-1">
    <location>
        <begin status="unknown"/>
        <end position="457"/>
    </location>
</feature>
<feature type="region of interest" description="Disordered" evidence="3">
    <location>
        <begin position="1"/>
        <end position="149"/>
    </location>
</feature>
<feature type="compositionally biased region" description="Gly residues" evidence="3">
    <location>
        <begin position="7"/>
        <end position="18"/>
    </location>
</feature>
<feature type="compositionally biased region" description="Pro residues" evidence="3">
    <location>
        <begin position="20"/>
        <end position="56"/>
    </location>
</feature>
<feature type="compositionally biased region" description="Low complexity" evidence="3">
    <location>
        <begin position="57"/>
        <end position="83"/>
    </location>
</feature>
<feature type="active site" evidence="1">
    <location>
        <position position="247"/>
    </location>
</feature>
<feature type="active site" evidence="1">
    <location>
        <position position="303"/>
    </location>
</feature>
<keyword id="KW-0053">Apoptosis</keyword>
<keyword id="KW-0378">Hydrolase</keyword>
<keyword id="KW-0645">Protease</keyword>
<keyword id="KW-1185">Reference proteome</keyword>
<keyword id="KW-0788">Thiol protease</keyword>
<keyword id="KW-0865">Zymogen</keyword>
<proteinExistence type="inferred from homology"/>
<evidence type="ECO:0000250" key="1"/>
<evidence type="ECO:0000255" key="2"/>
<evidence type="ECO:0000256" key="3">
    <source>
        <dbReference type="SAM" id="MobiDB-lite"/>
    </source>
</evidence>
<evidence type="ECO:0000305" key="4"/>